<keyword id="KW-0963">Cytoplasm</keyword>
<keyword id="KW-0206">Cytoskeleton</keyword>
<keyword id="KW-0342">GTP-binding</keyword>
<keyword id="KW-0460">Magnesium</keyword>
<keyword id="KW-0479">Metal-binding</keyword>
<keyword id="KW-0493">Microtubule</keyword>
<keyword id="KW-0547">Nucleotide-binding</keyword>
<keyword id="KW-1185">Reference proteome</keyword>
<comment type="function">
    <text>Tubulin is the major constituent of microtubules, a cylinder consisting of laterally associated linear protofilaments composed of alpha- and beta-tubulin heterodimers. Microtubules grow by the addition of GTP-tubulin dimers to the microtubule end, where a stabilizing cap forms. Below the cap, tubulin dimers are in GDP-bound state, owing to GTPase activity of alpha-tubulin.</text>
</comment>
<comment type="cofactor">
    <cofactor evidence="1">
        <name>Mg(2+)</name>
        <dbReference type="ChEBI" id="CHEBI:18420"/>
    </cofactor>
</comment>
<comment type="subunit">
    <text>Dimer of alpha and beta chains. A typical microtubule is a hollow water-filled tube with an outer diameter of 25 nm and an inner diameter of 15 nM. Alpha-beta heterodimers associate head-to-tail to form protofilaments running lengthwise along the microtubule wall with the beta-tubulin subunit facing the microtubule plus end conferring a structural polarity. Microtubules usually have 13 protofilaments but different protofilament numbers can be found in some organisms and specialized cells.</text>
</comment>
<comment type="subcellular location">
    <subcellularLocation>
        <location>Cytoplasm</location>
        <location>Cytoskeleton</location>
    </subcellularLocation>
</comment>
<comment type="developmental stage">
    <text evidence="3">Expressed in late sporogonial stages.</text>
</comment>
<comment type="similarity">
    <text evidence="4">Belongs to the tubulin family.</text>
</comment>
<dbReference type="EMBL" id="AL590443">
    <property type="protein sequence ID" value="CAD26226.1"/>
    <property type="molecule type" value="Genomic_DNA"/>
</dbReference>
<dbReference type="EMBL" id="L31807">
    <property type="protein sequence ID" value="AAA79115.1"/>
    <property type="molecule type" value="Genomic_DNA"/>
</dbReference>
<dbReference type="RefSeq" id="NP_597591.1">
    <property type="nucleotide sequence ID" value="NM_001040955.1"/>
</dbReference>
<dbReference type="SMR" id="Q8SS99"/>
<dbReference type="FunCoup" id="Q8SS99">
    <property type="interactions" value="48"/>
</dbReference>
<dbReference type="STRING" id="284813.Q8SS99"/>
<dbReference type="GeneID" id="858753"/>
<dbReference type="KEGG" id="ecu:ECU03_0820i"/>
<dbReference type="VEuPathDB" id="MicrosporidiaDB:ECU03_0820i"/>
<dbReference type="HOGENOM" id="CLU_015718_1_1_1"/>
<dbReference type="InParanoid" id="Q8SS99"/>
<dbReference type="OMA" id="WVPRSVN"/>
<dbReference type="OrthoDB" id="1662883at2759"/>
<dbReference type="Proteomes" id="UP000000819">
    <property type="component" value="Chromosome III"/>
</dbReference>
<dbReference type="GO" id="GO:0005737">
    <property type="term" value="C:cytoplasm"/>
    <property type="evidence" value="ECO:0007669"/>
    <property type="project" value="UniProtKB-KW"/>
</dbReference>
<dbReference type="GO" id="GO:0005874">
    <property type="term" value="C:microtubule"/>
    <property type="evidence" value="ECO:0007669"/>
    <property type="project" value="UniProtKB-KW"/>
</dbReference>
<dbReference type="GO" id="GO:0005525">
    <property type="term" value="F:GTP binding"/>
    <property type="evidence" value="ECO:0007669"/>
    <property type="project" value="UniProtKB-KW"/>
</dbReference>
<dbReference type="GO" id="GO:0003924">
    <property type="term" value="F:GTPase activity"/>
    <property type="evidence" value="ECO:0007669"/>
    <property type="project" value="InterPro"/>
</dbReference>
<dbReference type="GO" id="GO:0046872">
    <property type="term" value="F:metal ion binding"/>
    <property type="evidence" value="ECO:0007669"/>
    <property type="project" value="UniProtKB-KW"/>
</dbReference>
<dbReference type="GO" id="GO:0005200">
    <property type="term" value="F:structural constituent of cytoskeleton"/>
    <property type="evidence" value="ECO:0007669"/>
    <property type="project" value="InterPro"/>
</dbReference>
<dbReference type="GO" id="GO:0007017">
    <property type="term" value="P:microtubule-based process"/>
    <property type="evidence" value="ECO:0007669"/>
    <property type="project" value="InterPro"/>
</dbReference>
<dbReference type="CDD" id="cd02187">
    <property type="entry name" value="beta_tubulin"/>
    <property type="match status" value="1"/>
</dbReference>
<dbReference type="FunFam" id="1.10.287.600:FF:000002">
    <property type="entry name" value="Tubulin beta chain"/>
    <property type="match status" value="1"/>
</dbReference>
<dbReference type="FunFam" id="3.30.1330.20:FF:000002">
    <property type="entry name" value="Tubulin beta chain"/>
    <property type="match status" value="1"/>
</dbReference>
<dbReference type="FunFam" id="3.40.50.1440:FF:000009">
    <property type="entry name" value="Tubulin beta chain"/>
    <property type="match status" value="1"/>
</dbReference>
<dbReference type="Gene3D" id="1.10.287.600">
    <property type="entry name" value="Helix hairpin bin"/>
    <property type="match status" value="1"/>
</dbReference>
<dbReference type="Gene3D" id="3.30.1330.20">
    <property type="entry name" value="Tubulin/FtsZ, C-terminal domain"/>
    <property type="match status" value="1"/>
</dbReference>
<dbReference type="Gene3D" id="3.40.50.1440">
    <property type="entry name" value="Tubulin/FtsZ, GTPase domain"/>
    <property type="match status" value="1"/>
</dbReference>
<dbReference type="InterPro" id="IPR013838">
    <property type="entry name" value="Beta-tubulin_BS"/>
</dbReference>
<dbReference type="InterPro" id="IPR002453">
    <property type="entry name" value="Beta_tubulin"/>
</dbReference>
<dbReference type="InterPro" id="IPR008280">
    <property type="entry name" value="Tub_FtsZ_C"/>
</dbReference>
<dbReference type="InterPro" id="IPR000217">
    <property type="entry name" value="Tubulin"/>
</dbReference>
<dbReference type="InterPro" id="IPR037103">
    <property type="entry name" value="Tubulin/FtsZ-like_C"/>
</dbReference>
<dbReference type="InterPro" id="IPR018316">
    <property type="entry name" value="Tubulin/FtsZ_2-layer-sand-dom"/>
</dbReference>
<dbReference type="InterPro" id="IPR036525">
    <property type="entry name" value="Tubulin/FtsZ_GTPase_sf"/>
</dbReference>
<dbReference type="InterPro" id="IPR023123">
    <property type="entry name" value="Tubulin_C"/>
</dbReference>
<dbReference type="InterPro" id="IPR017975">
    <property type="entry name" value="Tubulin_CS"/>
</dbReference>
<dbReference type="InterPro" id="IPR003008">
    <property type="entry name" value="Tubulin_FtsZ_GTPase"/>
</dbReference>
<dbReference type="PANTHER" id="PTHR11588">
    <property type="entry name" value="TUBULIN"/>
    <property type="match status" value="1"/>
</dbReference>
<dbReference type="Pfam" id="PF00091">
    <property type="entry name" value="Tubulin"/>
    <property type="match status" value="1"/>
</dbReference>
<dbReference type="Pfam" id="PF03953">
    <property type="entry name" value="Tubulin_C"/>
    <property type="match status" value="1"/>
</dbReference>
<dbReference type="PRINTS" id="PR01163">
    <property type="entry name" value="BETATUBULIN"/>
</dbReference>
<dbReference type="PRINTS" id="PR01161">
    <property type="entry name" value="TUBULIN"/>
</dbReference>
<dbReference type="SMART" id="SM00864">
    <property type="entry name" value="Tubulin"/>
    <property type="match status" value="1"/>
</dbReference>
<dbReference type="SMART" id="SM00865">
    <property type="entry name" value="Tubulin_C"/>
    <property type="match status" value="1"/>
</dbReference>
<dbReference type="SUPFAM" id="SSF55307">
    <property type="entry name" value="Tubulin C-terminal domain-like"/>
    <property type="match status" value="1"/>
</dbReference>
<dbReference type="SUPFAM" id="SSF52490">
    <property type="entry name" value="Tubulin nucleotide-binding domain-like"/>
    <property type="match status" value="1"/>
</dbReference>
<dbReference type="PROSITE" id="PS00227">
    <property type="entry name" value="TUBULIN"/>
    <property type="match status" value="1"/>
</dbReference>
<dbReference type="PROSITE" id="PS00228">
    <property type="entry name" value="TUBULIN_B_AUTOREG"/>
    <property type="match status" value="1"/>
</dbReference>
<organism>
    <name type="scientific">Encephalitozoon cuniculi (strain GB-M1)</name>
    <name type="common">Microsporidian parasite</name>
    <dbReference type="NCBI Taxonomy" id="284813"/>
    <lineage>
        <taxon>Eukaryota</taxon>
        <taxon>Fungi</taxon>
        <taxon>Fungi incertae sedis</taxon>
        <taxon>Microsporidia</taxon>
        <taxon>Unikaryonidae</taxon>
        <taxon>Encephalitozoon</taxon>
    </lineage>
</organism>
<feature type="chain" id="PRO_0000048408" description="Tubulin beta chain">
    <location>
        <begin position="1"/>
        <end position="439"/>
    </location>
</feature>
<feature type="binding site" evidence="2">
    <location>
        <position position="11"/>
    </location>
    <ligand>
        <name>GTP</name>
        <dbReference type="ChEBI" id="CHEBI:37565"/>
    </ligand>
</feature>
<feature type="binding site" evidence="1">
    <location>
        <position position="69"/>
    </location>
    <ligand>
        <name>GTP</name>
        <dbReference type="ChEBI" id="CHEBI:37565"/>
    </ligand>
</feature>
<feature type="binding site" evidence="1">
    <location>
        <position position="69"/>
    </location>
    <ligand>
        <name>Mg(2+)</name>
        <dbReference type="ChEBI" id="CHEBI:18420"/>
    </ligand>
</feature>
<feature type="binding site" evidence="2">
    <location>
        <position position="138"/>
    </location>
    <ligand>
        <name>GTP</name>
        <dbReference type="ChEBI" id="CHEBI:37565"/>
    </ligand>
</feature>
<feature type="binding site" evidence="2">
    <location>
        <position position="142"/>
    </location>
    <ligand>
        <name>GTP</name>
        <dbReference type="ChEBI" id="CHEBI:37565"/>
    </ligand>
</feature>
<feature type="binding site" evidence="2">
    <location>
        <position position="143"/>
    </location>
    <ligand>
        <name>GTP</name>
        <dbReference type="ChEBI" id="CHEBI:37565"/>
    </ligand>
</feature>
<feature type="binding site" evidence="2">
    <location>
        <position position="144"/>
    </location>
    <ligand>
        <name>GTP</name>
        <dbReference type="ChEBI" id="CHEBI:37565"/>
    </ligand>
</feature>
<feature type="binding site" evidence="2">
    <location>
        <position position="204"/>
    </location>
    <ligand>
        <name>GTP</name>
        <dbReference type="ChEBI" id="CHEBI:37565"/>
    </ligand>
</feature>
<feature type="binding site" evidence="2">
    <location>
        <position position="226"/>
    </location>
    <ligand>
        <name>GTP</name>
        <dbReference type="ChEBI" id="CHEBI:37565"/>
    </ligand>
</feature>
<reference key="1">
    <citation type="journal article" date="2001" name="Nature">
        <title>Genome sequence and gene compaction of the eukaryote parasite Encephalitozoon cuniculi.</title>
        <authorList>
            <person name="Katinka M.D."/>
            <person name="Duprat S."/>
            <person name="Cornillot E."/>
            <person name="Metenier G."/>
            <person name="Thomarat F."/>
            <person name="Prensier G."/>
            <person name="Barbe V."/>
            <person name="Peyretaillade E."/>
            <person name="Brottier P."/>
            <person name="Wincker P."/>
            <person name="Delbac F."/>
            <person name="El Alaoui H."/>
            <person name="Peyret P."/>
            <person name="Saurin W."/>
            <person name="Gouy M."/>
            <person name="Weissenbach J."/>
            <person name="Vivares C.P."/>
        </authorList>
    </citation>
    <scope>NUCLEOTIDE SEQUENCE [LARGE SCALE GENOMIC DNA]</scope>
    <source>
        <strain>GB-M1</strain>
    </source>
</reference>
<reference key="2">
    <citation type="journal article" date="1994" name="J. Eukaryot. Microbiol.">
        <title>Cryptosporidium and microsporidial beta-tubulin sequences: predictions of benzimidazole sensitivity and phylogeny.</title>
        <authorList>
            <person name="Edlind T.D."/>
            <person name="Visvesvara G."/>
            <person name="Li J."/>
            <person name="Katiyar S.K."/>
        </authorList>
    </citation>
    <scope>NUCLEOTIDE SEQUENCE [GENOMIC DNA] OF 108-259</scope>
</reference>
<reference key="3">
    <citation type="journal article" date="2006" name="Proteomics">
        <title>Proteomic analysis of the eukaryotic parasite Encephalitozoon cuniculi (microsporidia): a reference map for proteins expressed in late sporogonial stages.</title>
        <authorList>
            <person name="Brosson D."/>
            <person name="Kuhn L."/>
            <person name="Delbac F."/>
            <person name="Garin J."/>
            <person name="Vivares C.P."/>
            <person name="Texier C."/>
        </authorList>
    </citation>
    <scope>IDENTIFICATION BY MASS SPECTROMETRY [LARGE SCALE ANALYSIS]</scope>
    <scope>DEVELOPMENTAL STAGE</scope>
</reference>
<gene>
    <name type="primary">TUB2</name>
    <name type="ordered locus">ECU03_0820i</name>
</gene>
<evidence type="ECO:0000250" key="1">
    <source>
        <dbReference type="UniProtKB" id="P68363"/>
    </source>
</evidence>
<evidence type="ECO:0000250" key="2">
    <source>
        <dbReference type="UniProtKB" id="Q13509"/>
    </source>
</evidence>
<evidence type="ECO:0000269" key="3">
    <source>
    </source>
</evidence>
<evidence type="ECO:0000305" key="4"/>
<protein>
    <recommendedName>
        <fullName>Tubulin beta chain</fullName>
    </recommendedName>
    <alternativeName>
        <fullName>Beta-tubulin</fullName>
    </alternativeName>
</protein>
<proteinExistence type="evidence at protein level"/>
<name>TBB_ENCCU</name>
<accession>Q8SS99</accession>
<accession>Q24827</accession>
<sequence>MREIIHLQTGQCGNQVGCKFWETISGEHGIDQTGRYVGTSDNQLERINVYYNEASSKKYVPRAVLIDLEPGTMDAVRQGPFGELFRPDNFVFGQSGAGNNWAKGHYTEGAELIDSVMDVVRKEAESSDCLQGFQITHSLGGGTGAGMGTLLLSKIREDFPDRMICTFSVVPSPKVSDTVVEPYNATLSIHQLVENADETFCIDNEALYDICFRTLKLNNPGYGDLNHLVSLVMSGVTTCLRFPGQLNADLRKLAVNMIPFPRLHFFVAGFAPLIAIGTQKFKTYSVSELTQQMFDSKNMMTACDPRKGRYLTVAAMFRGKISMKDVDEQMSMVQSKNSSLFVEWIPSNVKTAVCDIAPTGLEMSATFVGNTTSIQELFKRISDQFTVMFRRKAFLHWYTGEGMDEMEFSEAESNMNDLLSEYQQYQDATIEDAEEFLVN</sequence>